<sequence>MDEQVIFTTAVSGTVCQVHSVGQANLRQCAASTPNSAVLMGDKLLVAQANKALINVYSVDSRSKKEALEQRLPLPEQLSCLAVVENHTGDAGVHQQLPYLLLGSTPSGKLYVWEAGSGKLLTVKAMAHYQAITKMQAIINGKYVVTAGADSRLIIWQTASLVLEEEPKPLYVLHDHTLAITDFAVSNAHNGKYLNSKLYTVSEDMTVRCYQLSSQLEQPQLLATFTFPLALTSIALDPADRCLYVGTREGAFALPLFYKLDSSGATLVNLLQPGKHQIYSIVPEQAGVEVNKQELYRMGQLLCSKMLSCHVSLIRVSMDGSMVLLATGSGNCVVVDTYSKQPVKELAPLLAPGTQTGPVSNIITRSMTVKSDSLLQDLNLADARATEAIKIPALAKTVFDKTGTHDIIYCAPTDTLSSVLPRALDLPQYLDMIAEEDSVFANTPVTRSTVKVVGELAPAKAEALPASSAEAQQSADDTDAEVARLRESLQQLTGAYKDLRALHEKLYEEHEKLLQTSK</sequence>
<reference key="1">
    <citation type="journal article" date="2004" name="Science">
        <title>The Ashbya gossypii genome as a tool for mapping the ancient Saccharomyces cerevisiae genome.</title>
        <authorList>
            <person name="Dietrich F.S."/>
            <person name="Voegeli S."/>
            <person name="Brachat S."/>
            <person name="Lerch A."/>
            <person name="Gates K."/>
            <person name="Steiner S."/>
            <person name="Mohr C."/>
            <person name="Poehlmann R."/>
            <person name="Luedi P."/>
            <person name="Choi S."/>
            <person name="Wing R.A."/>
            <person name="Flavier A."/>
            <person name="Gaffney T.D."/>
            <person name="Philippsen P."/>
        </authorList>
    </citation>
    <scope>NUCLEOTIDE SEQUENCE [LARGE SCALE GENOMIC DNA]</scope>
    <source>
        <strain>ATCC 10895 / CBS 109.51 / FGSC 9923 / NRRL Y-1056</strain>
    </source>
</reference>
<reference key="2">
    <citation type="journal article" date="2013" name="G3 (Bethesda)">
        <title>Genomes of Ashbya fungi isolated from insects reveal four mating-type loci, numerous translocations, lack of transposons, and distinct gene duplications.</title>
        <authorList>
            <person name="Dietrich F.S."/>
            <person name="Voegeli S."/>
            <person name="Kuo S."/>
            <person name="Philippsen P."/>
        </authorList>
    </citation>
    <scope>GENOME REANNOTATION</scope>
    <source>
        <strain>ATCC 10895 / CBS 109.51 / FGSC 9923 / NRRL Y-1056</strain>
    </source>
</reference>
<organism>
    <name type="scientific">Eremothecium gossypii (strain ATCC 10895 / CBS 109.51 / FGSC 9923 / NRRL Y-1056)</name>
    <name type="common">Yeast</name>
    <name type="synonym">Ashbya gossypii</name>
    <dbReference type="NCBI Taxonomy" id="284811"/>
    <lineage>
        <taxon>Eukaryota</taxon>
        <taxon>Fungi</taxon>
        <taxon>Dikarya</taxon>
        <taxon>Ascomycota</taxon>
        <taxon>Saccharomycotina</taxon>
        <taxon>Saccharomycetes</taxon>
        <taxon>Saccharomycetales</taxon>
        <taxon>Saccharomycetaceae</taxon>
        <taxon>Eremothecium</taxon>
    </lineage>
</organism>
<comment type="function">
    <text evidence="1">Component of the RIX1 complex required for processing of ITS2 sequences from 35S pre-rRNA.</text>
</comment>
<comment type="subunit">
    <text evidence="1">Component of the RIX1 complex, composed of IPI1, RIX1/IPI2 and IPI3 in a 1:2:2 stoichiometry. The complex interacts (via RIX1) with MDN1 (via its hexameric AAA ATPase ring) and the pre-60S ribosome particles.</text>
</comment>
<comment type="subcellular location">
    <subcellularLocation>
        <location evidence="1">Nucleus</location>
    </subcellularLocation>
</comment>
<comment type="similarity">
    <text evidence="2">Belongs to the WD repeat IPI3/WDR18 family.</text>
</comment>
<name>IPI3_EREGS</name>
<feature type="chain" id="PRO_0000308736" description="Pre-rRNA-processing protein IPI3">
    <location>
        <begin position="1"/>
        <end position="518"/>
    </location>
</feature>
<feature type="repeat" description="WD 1">
    <location>
        <begin position="73"/>
        <end position="123"/>
    </location>
</feature>
<feature type="repeat" description="WD 2">
    <location>
        <begin position="127"/>
        <end position="166"/>
    </location>
</feature>
<feature type="repeat" description="WD 3">
    <location>
        <begin position="175"/>
        <end position="220"/>
    </location>
</feature>
<feature type="repeat" description="WD 4">
    <location>
        <begin position="226"/>
        <end position="267"/>
    </location>
</feature>
<protein>
    <recommendedName>
        <fullName>Pre-rRNA-processing protein IPI3</fullName>
    </recommendedName>
</protein>
<gene>
    <name type="primary">IPI3</name>
    <name type="ordered locus">ABL141C</name>
</gene>
<accession>Q75E14</accession>
<evidence type="ECO:0000250" key="1">
    <source>
        <dbReference type="UniProtKB" id="P53877"/>
    </source>
</evidence>
<evidence type="ECO:0000305" key="2"/>
<proteinExistence type="inferred from homology"/>
<dbReference type="EMBL" id="AE016815">
    <property type="protein sequence ID" value="AAS50630.1"/>
    <property type="molecule type" value="Genomic_DNA"/>
</dbReference>
<dbReference type="RefSeq" id="NP_982806.1">
    <property type="nucleotide sequence ID" value="NM_208159.1"/>
</dbReference>
<dbReference type="SMR" id="Q75E14"/>
<dbReference type="FunCoup" id="Q75E14">
    <property type="interactions" value="485"/>
</dbReference>
<dbReference type="STRING" id="284811.Q75E14"/>
<dbReference type="EnsemblFungi" id="AAS50630">
    <property type="protein sequence ID" value="AAS50630"/>
    <property type="gene ID" value="AGOS_ABL141C"/>
</dbReference>
<dbReference type="GeneID" id="4618886"/>
<dbReference type="KEGG" id="ago:AGOS_ABL141C"/>
<dbReference type="eggNOG" id="KOG0646">
    <property type="taxonomic scope" value="Eukaryota"/>
</dbReference>
<dbReference type="HOGENOM" id="CLU_029749_4_0_1"/>
<dbReference type="InParanoid" id="Q75E14"/>
<dbReference type="OMA" id="WEAHYNK"/>
<dbReference type="OrthoDB" id="756370at2759"/>
<dbReference type="Proteomes" id="UP000000591">
    <property type="component" value="Chromosome II"/>
</dbReference>
<dbReference type="GO" id="GO:0005656">
    <property type="term" value="C:nuclear pre-replicative complex"/>
    <property type="evidence" value="ECO:0000318"/>
    <property type="project" value="GO_Central"/>
</dbReference>
<dbReference type="GO" id="GO:0120330">
    <property type="term" value="C:rixosome complex"/>
    <property type="evidence" value="ECO:0000318"/>
    <property type="project" value="GO_Central"/>
</dbReference>
<dbReference type="GO" id="GO:0003682">
    <property type="term" value="F:chromatin binding"/>
    <property type="evidence" value="ECO:0007669"/>
    <property type="project" value="EnsemblFungi"/>
</dbReference>
<dbReference type="GO" id="GO:0006261">
    <property type="term" value="P:DNA-templated DNA replication"/>
    <property type="evidence" value="ECO:0000318"/>
    <property type="project" value="GO_Central"/>
</dbReference>
<dbReference type="GO" id="GO:0006267">
    <property type="term" value="P:pre-replicative complex assembly involved in nuclear cell cycle DNA replication"/>
    <property type="evidence" value="ECO:0007669"/>
    <property type="project" value="EnsemblFungi"/>
</dbReference>
<dbReference type="GO" id="GO:0030174">
    <property type="term" value="P:regulation of DNA-templated DNA replication initiation"/>
    <property type="evidence" value="ECO:0007669"/>
    <property type="project" value="EnsemblFungi"/>
</dbReference>
<dbReference type="GO" id="GO:0000027">
    <property type="term" value="P:ribosomal large subunit assembly"/>
    <property type="evidence" value="ECO:0007669"/>
    <property type="project" value="EnsemblFungi"/>
</dbReference>
<dbReference type="GO" id="GO:0006364">
    <property type="term" value="P:rRNA processing"/>
    <property type="evidence" value="ECO:0000318"/>
    <property type="project" value="GO_Central"/>
</dbReference>
<dbReference type="Gene3D" id="2.130.10.10">
    <property type="entry name" value="YVTN repeat-like/Quinoprotein amine dehydrogenase"/>
    <property type="match status" value="1"/>
</dbReference>
<dbReference type="InterPro" id="IPR015943">
    <property type="entry name" value="WD40/YVTN_repeat-like_dom_sf"/>
</dbReference>
<dbReference type="InterPro" id="IPR036322">
    <property type="entry name" value="WD40_repeat_dom_sf"/>
</dbReference>
<dbReference type="InterPro" id="IPR001680">
    <property type="entry name" value="WD40_rpt"/>
</dbReference>
<dbReference type="InterPro" id="IPR045227">
    <property type="entry name" value="WDR18/Ipi3/RID3"/>
</dbReference>
<dbReference type="PANTHER" id="PTHR18763:SF0">
    <property type="entry name" value="WD REPEAT-CONTAINING PROTEIN 18"/>
    <property type="match status" value="1"/>
</dbReference>
<dbReference type="PANTHER" id="PTHR18763">
    <property type="entry name" value="WD-REPEAT PROTEIN 18"/>
    <property type="match status" value="1"/>
</dbReference>
<dbReference type="Pfam" id="PF00400">
    <property type="entry name" value="WD40"/>
    <property type="match status" value="1"/>
</dbReference>
<dbReference type="SMART" id="SM00320">
    <property type="entry name" value="WD40"/>
    <property type="match status" value="3"/>
</dbReference>
<dbReference type="SUPFAM" id="SSF50978">
    <property type="entry name" value="WD40 repeat-like"/>
    <property type="match status" value="1"/>
</dbReference>
<dbReference type="PROSITE" id="PS50082">
    <property type="entry name" value="WD_REPEATS_2"/>
    <property type="match status" value="1"/>
</dbReference>
<dbReference type="PROSITE" id="PS50294">
    <property type="entry name" value="WD_REPEATS_REGION"/>
    <property type="match status" value="1"/>
</dbReference>
<keyword id="KW-0539">Nucleus</keyword>
<keyword id="KW-1185">Reference proteome</keyword>
<keyword id="KW-0677">Repeat</keyword>
<keyword id="KW-0690">Ribosome biogenesis</keyword>
<keyword id="KW-0698">rRNA processing</keyword>
<keyword id="KW-0853">WD repeat</keyword>